<name>ICP27_HHV1E</name>
<organism>
    <name type="scientific">Human herpesvirus 1 (strain HFEM)</name>
    <name type="common">HHV-1</name>
    <name type="synonym">Human herpes simplex virus 1</name>
    <dbReference type="NCBI Taxonomy" id="10303"/>
    <lineage>
        <taxon>Viruses</taxon>
        <taxon>Duplodnaviria</taxon>
        <taxon>Heunggongvirae</taxon>
        <taxon>Peploviricota</taxon>
        <taxon>Herviviricetes</taxon>
        <taxon>Herpesvirales</taxon>
        <taxon>Orthoherpesviridae</taxon>
        <taxon>Alphaherpesvirinae</taxon>
        <taxon>Simplexvirus</taxon>
        <taxon>Simplexvirus humanalpha1</taxon>
        <taxon>Human herpesvirus 1</taxon>
    </lineage>
</organism>
<sequence length="511" mass="55143">MATDIDMLIDLGLDLSDSDLDEDPPEPAESRRDDLESDSSGECSSSDEDMEDPHGEDGPEPILDAARPAVRPSRPEDPGVPSTQTPRPTERQGPNDPQPAPHSVWSRLGARRPSCSPEQHGGKVARLQPPPTKAQPARGGRRGRRRGRGRGGPGAADGLSDPRRRAPRTNRNPGDRPGAGWTDGPGAPHGEAWRGSEQPDPPGGPRTRGVRQAPPPLMTLAIAPPPADPRAPAPERKAPAADTIDATTRLVLRSISERAAVDRISESFGRSAQVMPDPFGGQPFPAANSPWAPVLAGQGGPFDAETRRVSWETLVAHGPSLYRTFAGNPRAASTAKAMRDCVLRQENFIEALASADETLAWCKMCIHHNLPLRPQDPIIGTTAAVLDNLATRLRPFLQCYLKARGLCGLDELCSRRRLADIKDIASFVFVILARLANRVERGVAEIDYATLGVGVGEKMHFYLPGACMAGLIEILDTHRQECSSRVCELTASHIVAPPYVHGKYFYCNSLF</sequence>
<organismHost>
    <name type="scientific">Homo sapiens</name>
    <name type="common">Human</name>
    <dbReference type="NCBI Taxonomy" id="9606"/>
</organismHost>
<dbReference type="EMBL" id="M90438">
    <property type="status" value="NOT_ANNOTATED_CDS"/>
    <property type="molecule type" value="Genomic_DNA"/>
</dbReference>
<dbReference type="PIR" id="A48560">
    <property type="entry name" value="A48560"/>
</dbReference>
<dbReference type="PDB" id="6FAD">
    <property type="method" value="X-ray"/>
    <property type="resolution" value="2.80 A"/>
    <property type="chains" value="E/F/G/H=137-152"/>
</dbReference>
<dbReference type="PDBsum" id="6FAD"/>
<dbReference type="BMRB" id="P36295"/>
<dbReference type="SMR" id="P36295"/>
<dbReference type="GO" id="GO:0030430">
    <property type="term" value="C:host cell cytoplasm"/>
    <property type="evidence" value="ECO:0007669"/>
    <property type="project" value="UniProtKB-SubCell"/>
</dbReference>
<dbReference type="GO" id="GO:0042025">
    <property type="term" value="C:host cell nucleus"/>
    <property type="evidence" value="ECO:0007669"/>
    <property type="project" value="UniProtKB-SubCell"/>
</dbReference>
<dbReference type="GO" id="GO:0003723">
    <property type="term" value="F:RNA binding"/>
    <property type="evidence" value="ECO:0007669"/>
    <property type="project" value="UniProtKB-KW"/>
</dbReference>
<dbReference type="GO" id="GO:0008270">
    <property type="term" value="F:zinc ion binding"/>
    <property type="evidence" value="ECO:0007669"/>
    <property type="project" value="UniProtKB-KW"/>
</dbReference>
<dbReference type="GO" id="GO:0006355">
    <property type="term" value="P:regulation of DNA-templated transcription"/>
    <property type="evidence" value="ECO:0007669"/>
    <property type="project" value="InterPro"/>
</dbReference>
<dbReference type="GO" id="GO:0085033">
    <property type="term" value="P:symbiont-mediated activation of host NF-kappaB cascade"/>
    <property type="evidence" value="ECO:0007669"/>
    <property type="project" value="UniProtKB-KW"/>
</dbReference>
<dbReference type="GO" id="GO:0039645">
    <property type="term" value="P:symbiont-mediated perturbation of host cell cycle G1/S transition checkpoint"/>
    <property type="evidence" value="ECO:0007669"/>
    <property type="project" value="UniProtKB-KW"/>
</dbReference>
<dbReference type="GO" id="GO:0039657">
    <property type="term" value="P:symbiont-mediated suppression of host gene expression"/>
    <property type="evidence" value="ECO:0007669"/>
    <property type="project" value="UniProtKB-KW"/>
</dbReference>
<dbReference type="GO" id="GO:0039524">
    <property type="term" value="P:symbiont-mediated suppression of host mRNA processing"/>
    <property type="evidence" value="ECO:0007669"/>
    <property type="project" value="UniProtKB-KW"/>
</dbReference>
<dbReference type="InterPro" id="IPR031752">
    <property type="entry name" value="HHV-1_REF-bd"/>
</dbReference>
<dbReference type="InterPro" id="IPR008648">
    <property type="entry name" value="ICP27-like"/>
</dbReference>
<dbReference type="Pfam" id="PF05459">
    <property type="entry name" value="Herpes_UL69"/>
    <property type="match status" value="1"/>
</dbReference>
<dbReference type="Pfam" id="PF16852">
    <property type="entry name" value="HHV-1_VABD"/>
    <property type="match status" value="1"/>
</dbReference>
<reference key="1">
    <citation type="journal article" date="1992" name="Virus Res.">
        <title>Determination of the coding capacity of the BamHI DNA fragment B of apathogenic Herpes simplex virus type 1 strain HFEM by DNA nucleotide sequence analysis.</title>
        <authorList>
            <person name="Rosen-Wolff A."/>
            <person name="Frank S."/>
            <person name="Raab K."/>
            <person name="Moyal M."/>
            <person name="Becker Y."/>
            <person name="Darai G."/>
        </authorList>
    </citation>
    <scope>NUCLEOTIDE SEQUENCE [GENOMIC DNA]</scope>
</reference>
<accession>P36295</accession>
<gene>
    <name type="ORF">UL54</name>
</gene>
<protein>
    <recommendedName>
        <fullName>mRNA export factor</fullName>
    </recommendedName>
    <alternativeName>
        <fullName>Immediate-early protein IE63</fullName>
    </alternativeName>
    <alternativeName>
        <fullName>Infected cell protein 27</fullName>
        <shortName>ICP27</shortName>
    </alternativeName>
</protein>
<comment type="function">
    <text evidence="1">Multifunctional regulator of the expression of viral genes that contributes to the shutoff of host protein synthesis and mediates nuclear export of viral intronless mRNAs. Early in infection, this immediate early (EI) protein mediates the inhibition of cellular splicing. This results in the accumulation of unprocessed 3'end pre-mRNAs which can't be exported from the nucleus. Cellular protein synthesis is thereby shut off early after virus infection. Later in the infection, it helps recruit cellular RNA polymerase II to viral replication sites and promotes the nuclear export of viral intronless mRNAs by interacting with mRNAs and host NXF1/TAP. ICP27 binds to NUP62 which may provide facilitated viral mRNA export and may compete with some host cell transport receptors for binding and inhibit cellular nucleocytoplasmic transport pathways. Also stimulates translation of viral transcripts. Repression of host gene expression blocks the cell cycle at the G1 phase and prevents apoptosis. Seems to silence the 3' splice site of the promyelocytic leukemia (PML) intron 7a, thereby switching PML isoforms from PML-II to PML-V. This could be linked to the accelerated mRNA export induced by ICP27 which might not provide sufficient time for PML pre-mRNA to be spliced in the nucleus (By similarity).</text>
</comment>
<comment type="subunit">
    <text evidence="1">Interacts with host RBP1; this interaction facilitates the RNA polymerase recruitment to viral transcription sites. Interacts (via the RGG box) with host ALYREF/THOC4; this interaction recruits ALYREF to viral replication compartments and probably directs viral mRNA to the TAP/NFX1 pathway. Interacts (via the RGG box) with host SRPK1; this interaction relocalizes SRPK1 to the nucleus and seems to alter its activity. Interacts with ICP4; this interaction modulates ICP4 DNA-binding activity. Interacts with host NXF1; this interaction allows efficient export of HSV-1 early and late transcripts (By similarity).</text>
</comment>
<comment type="subcellular location">
    <subcellularLocation>
        <location evidence="1">Host cytoplasm</location>
    </subcellularLocation>
    <subcellularLocation>
        <location evidence="1">Host nucleus</location>
    </subcellularLocation>
    <text evidence="1">Shuttles between the nucleus and the cytoplasm.</text>
</comment>
<comment type="domain">
    <text evidence="1">Binds viral intronless RNAs through the RGG region.</text>
</comment>
<comment type="PTM">
    <text evidence="1">Methylated within the RGG box possibly by host PRMT1. When hypomethylated, ICP27 is exported to the cytoplasm earlier and more rapidly (By similarity).</text>
</comment>
<comment type="PTM">
    <text evidence="1">Phosphorylated.</text>
</comment>
<comment type="similarity">
    <text evidence="4">Belongs to the HHV-1 ICP27 protein family.</text>
</comment>
<proteinExistence type="evidence at protein level"/>
<keyword id="KW-0002">3D-structure</keyword>
<keyword id="KW-1074">Activation of host NF-kappa-B by virus</keyword>
<keyword id="KW-0010">Activator</keyword>
<keyword id="KW-0244">Early protein</keyword>
<keyword id="KW-1262">Eukaryotic host gene expression shutoff by virus</keyword>
<keyword id="KW-1078">G1/S host cell cycle checkpoint dysregulation by virus</keyword>
<keyword id="KW-1035">Host cytoplasm</keyword>
<keyword id="KW-1190">Host gene expression shutoff by virus</keyword>
<keyword id="KW-1192">Host mRNA suppression by virus</keyword>
<keyword id="KW-1048">Host nucleus</keyword>
<keyword id="KW-0945">Host-virus interaction</keyword>
<keyword id="KW-1103">Inhibition of host pre-mRNA processing by virus</keyword>
<keyword id="KW-0479">Metal-binding</keyword>
<keyword id="KW-0488">Methylation</keyword>
<keyword id="KW-1121">Modulation of host cell cycle by virus</keyword>
<keyword id="KW-0597">Phosphoprotein</keyword>
<keyword id="KW-0694">RNA-binding</keyword>
<keyword id="KW-0804">Transcription</keyword>
<keyword id="KW-0805">Transcription regulation</keyword>
<keyword id="KW-0862">Zinc</keyword>
<keyword id="KW-0863">Zinc-finger</keyword>
<evidence type="ECO:0000250" key="1"/>
<evidence type="ECO:0000250" key="2">
    <source>
        <dbReference type="UniProtKB" id="P10238"/>
    </source>
</evidence>
<evidence type="ECO:0000256" key="3">
    <source>
        <dbReference type="SAM" id="MobiDB-lite"/>
    </source>
</evidence>
<evidence type="ECO:0000305" key="4"/>
<feature type="chain" id="PRO_0000115824" description="mRNA export factor">
    <location>
        <begin position="1"/>
        <end position="511"/>
    </location>
</feature>
<feature type="zinc finger region" description="CHC2-type" evidence="2">
    <location>
        <begin position="399"/>
        <end position="487"/>
    </location>
</feature>
<feature type="region of interest" description="Disordered" evidence="3">
    <location>
        <begin position="1"/>
        <end position="244"/>
    </location>
</feature>
<feature type="region of interest" description="Interaction with host ALYREF" evidence="1">
    <location>
        <begin position="104"/>
        <end position="112"/>
    </location>
</feature>
<feature type="region of interest" description="RGG-box" evidence="1">
    <location>
        <begin position="138"/>
        <end position="152"/>
    </location>
</feature>
<feature type="short sequence motif" description="Nuclear export signal" evidence="1">
    <location>
        <begin position="5"/>
        <end position="17"/>
    </location>
</feature>
<feature type="short sequence motif" description="Nuclear localization signal" evidence="1">
    <location>
        <begin position="110"/>
        <end position="138"/>
    </location>
</feature>
<feature type="compositionally biased region" description="Low complexity" evidence="3">
    <location>
        <begin position="1"/>
        <end position="15"/>
    </location>
</feature>
<feature type="compositionally biased region" description="Acidic residues" evidence="3">
    <location>
        <begin position="16"/>
        <end position="26"/>
    </location>
</feature>
<feature type="compositionally biased region" description="Acidic residues" evidence="3">
    <location>
        <begin position="35"/>
        <end position="51"/>
    </location>
</feature>
<feature type="compositionally biased region" description="Basic residues" evidence="3">
    <location>
        <begin position="139"/>
        <end position="149"/>
    </location>
</feature>
<feature type="compositionally biased region" description="Pro residues" evidence="3">
    <location>
        <begin position="213"/>
        <end position="232"/>
    </location>
</feature>
<feature type="binding site" evidence="2">
    <location>
        <position position="399"/>
    </location>
    <ligand>
        <name>Zn(2+)</name>
        <dbReference type="ChEBI" id="CHEBI:29105"/>
    </ligand>
</feature>
<feature type="binding site" evidence="2">
    <location>
        <position position="478"/>
    </location>
    <ligand>
        <name>Zn(2+)</name>
        <dbReference type="ChEBI" id="CHEBI:29105"/>
    </ligand>
</feature>
<feature type="binding site" evidence="2">
    <location>
        <position position="482"/>
    </location>
    <ligand>
        <name>Zn(2+)</name>
        <dbReference type="ChEBI" id="CHEBI:29105"/>
    </ligand>
</feature>
<feature type="binding site" evidence="2">
    <location>
        <position position="487"/>
    </location>
    <ligand>
        <name>Zn(2+)</name>
        <dbReference type="ChEBI" id="CHEBI:29105"/>
    </ligand>
</feature>
<feature type="modified residue" description="Phosphoserine; by host" evidence="1">
    <location>
        <position position="16"/>
    </location>
</feature>
<feature type="modified residue" description="Phosphoserine; by host" evidence="1">
    <location>
        <position position="18"/>
    </location>
</feature>
<feature type="modified residue" description="Phosphoserine; by host" evidence="1">
    <location>
        <position position="114"/>
    </location>
</feature>
<feature type="modified residue" description="Dimethylated arginine; by host" evidence="2">
    <location>
        <position position="138"/>
    </location>
</feature>
<feature type="modified residue" description="Omega-N-methylarginine; by host" evidence="2">
    <location>
        <position position="148"/>
    </location>
</feature>
<feature type="modified residue" description="Dimethylated arginine; by host" evidence="2">
    <location>
        <position position="150"/>
    </location>
</feature>